<feature type="chain" id="PRO_0000375520" description="Succinyl-diaminopimelate desuccinylase">
    <location>
        <begin position="1"/>
        <end position="365"/>
    </location>
</feature>
<feature type="active site" evidence="1">
    <location>
        <position position="67"/>
    </location>
</feature>
<feature type="active site" description="Proton acceptor" evidence="1">
    <location>
        <position position="126"/>
    </location>
</feature>
<feature type="binding site" evidence="1">
    <location>
        <position position="65"/>
    </location>
    <ligand>
        <name>Zn(2+)</name>
        <dbReference type="ChEBI" id="CHEBI:29105"/>
        <label>1</label>
    </ligand>
</feature>
<feature type="binding site" evidence="1">
    <location>
        <position position="96"/>
    </location>
    <ligand>
        <name>Zn(2+)</name>
        <dbReference type="ChEBI" id="CHEBI:29105"/>
        <label>1</label>
    </ligand>
</feature>
<feature type="binding site" evidence="1">
    <location>
        <position position="96"/>
    </location>
    <ligand>
        <name>Zn(2+)</name>
        <dbReference type="ChEBI" id="CHEBI:29105"/>
        <label>2</label>
    </ligand>
</feature>
<feature type="binding site" evidence="1">
    <location>
        <position position="127"/>
    </location>
    <ligand>
        <name>Zn(2+)</name>
        <dbReference type="ChEBI" id="CHEBI:29105"/>
        <label>2</label>
    </ligand>
</feature>
<feature type="binding site" evidence="1">
    <location>
        <position position="155"/>
    </location>
    <ligand>
        <name>Zn(2+)</name>
        <dbReference type="ChEBI" id="CHEBI:29105"/>
        <label>1</label>
    </ligand>
</feature>
<feature type="binding site" evidence="1">
    <location>
        <position position="340"/>
    </location>
    <ligand>
        <name>Zn(2+)</name>
        <dbReference type="ChEBI" id="CHEBI:29105"/>
        <label>2</label>
    </ligand>
</feature>
<keyword id="KW-0028">Amino-acid biosynthesis</keyword>
<keyword id="KW-0170">Cobalt</keyword>
<keyword id="KW-0220">Diaminopimelate biosynthesis</keyword>
<keyword id="KW-0378">Hydrolase</keyword>
<keyword id="KW-0457">Lysine biosynthesis</keyword>
<keyword id="KW-0479">Metal-binding</keyword>
<keyword id="KW-1185">Reference proteome</keyword>
<keyword id="KW-0862">Zinc</keyword>
<evidence type="ECO:0000255" key="1">
    <source>
        <dbReference type="HAMAP-Rule" id="MF_01690"/>
    </source>
</evidence>
<gene>
    <name evidence="1" type="primary">dapE</name>
    <name type="ordered locus">Cj1048c</name>
</gene>
<organism>
    <name type="scientific">Campylobacter jejuni subsp. jejuni serotype O:2 (strain ATCC 700819 / NCTC 11168)</name>
    <dbReference type="NCBI Taxonomy" id="192222"/>
    <lineage>
        <taxon>Bacteria</taxon>
        <taxon>Pseudomonadati</taxon>
        <taxon>Campylobacterota</taxon>
        <taxon>Epsilonproteobacteria</taxon>
        <taxon>Campylobacterales</taxon>
        <taxon>Campylobacteraceae</taxon>
        <taxon>Campylobacter</taxon>
    </lineage>
</organism>
<comment type="function">
    <text evidence="1">Catalyzes the hydrolysis of N-succinyl-L,L-diaminopimelic acid (SDAP), forming succinate and LL-2,6-diaminopimelate (DAP), an intermediate involved in the bacterial biosynthesis of lysine and meso-diaminopimelic acid, an essential component of bacterial cell walls.</text>
</comment>
<comment type="catalytic activity">
    <reaction evidence="1">
        <text>N-succinyl-(2S,6S)-2,6-diaminopimelate + H2O = (2S,6S)-2,6-diaminopimelate + succinate</text>
        <dbReference type="Rhea" id="RHEA:22608"/>
        <dbReference type="ChEBI" id="CHEBI:15377"/>
        <dbReference type="ChEBI" id="CHEBI:30031"/>
        <dbReference type="ChEBI" id="CHEBI:57609"/>
        <dbReference type="ChEBI" id="CHEBI:58087"/>
        <dbReference type="EC" id="3.5.1.18"/>
    </reaction>
</comment>
<comment type="cofactor">
    <cofactor evidence="1">
        <name>Zn(2+)</name>
        <dbReference type="ChEBI" id="CHEBI:29105"/>
    </cofactor>
    <cofactor evidence="1">
        <name>Co(2+)</name>
        <dbReference type="ChEBI" id="CHEBI:48828"/>
    </cofactor>
    <text evidence="1">Binds 2 Zn(2+) or Co(2+) ions per subunit.</text>
</comment>
<comment type="pathway">
    <text evidence="1">Amino-acid biosynthesis; L-lysine biosynthesis via DAP pathway; LL-2,6-diaminopimelate from (S)-tetrahydrodipicolinate (succinylase route): step 3/3.</text>
</comment>
<comment type="subunit">
    <text evidence="1">Homodimer.</text>
</comment>
<comment type="similarity">
    <text evidence="1">Belongs to the peptidase M20A family. DapE subfamily.</text>
</comment>
<accession>Q0P9K4</accession>
<dbReference type="EC" id="3.5.1.18" evidence="1"/>
<dbReference type="EMBL" id="AL111168">
    <property type="protein sequence ID" value="CAL35166.1"/>
    <property type="molecule type" value="Genomic_DNA"/>
</dbReference>
<dbReference type="PIR" id="E81307">
    <property type="entry name" value="E81307"/>
</dbReference>
<dbReference type="RefSeq" id="WP_002854067.1">
    <property type="nucleotide sequence ID" value="NZ_SZUC01000001.1"/>
</dbReference>
<dbReference type="RefSeq" id="YP_002344443.1">
    <property type="nucleotide sequence ID" value="NC_002163.1"/>
</dbReference>
<dbReference type="SMR" id="Q0P9K4"/>
<dbReference type="IntAct" id="Q0P9K4">
    <property type="interactions" value="34"/>
</dbReference>
<dbReference type="STRING" id="192222.Cj1048c"/>
<dbReference type="PaxDb" id="192222-Cj1048c"/>
<dbReference type="EnsemblBacteria" id="CAL35166">
    <property type="protein sequence ID" value="CAL35166"/>
    <property type="gene ID" value="Cj1048c"/>
</dbReference>
<dbReference type="GeneID" id="905340"/>
<dbReference type="KEGG" id="cje:Cj1048c"/>
<dbReference type="PATRIC" id="fig|192222.6.peg.1030"/>
<dbReference type="eggNOG" id="COG0624">
    <property type="taxonomic scope" value="Bacteria"/>
</dbReference>
<dbReference type="HOGENOM" id="CLU_021802_4_0_7"/>
<dbReference type="OrthoDB" id="5486471at2"/>
<dbReference type="UniPathway" id="UPA00034">
    <property type="reaction ID" value="UER00021"/>
</dbReference>
<dbReference type="Proteomes" id="UP000000799">
    <property type="component" value="Chromosome"/>
</dbReference>
<dbReference type="GO" id="GO:0008777">
    <property type="term" value="F:acetylornithine deacetylase activity"/>
    <property type="evidence" value="ECO:0007669"/>
    <property type="project" value="TreeGrafter"/>
</dbReference>
<dbReference type="GO" id="GO:0046872">
    <property type="term" value="F:metal ion binding"/>
    <property type="evidence" value="ECO:0007669"/>
    <property type="project" value="UniProtKB-KW"/>
</dbReference>
<dbReference type="GO" id="GO:0009014">
    <property type="term" value="F:succinyl-diaminopimelate desuccinylase activity"/>
    <property type="evidence" value="ECO:0007669"/>
    <property type="project" value="UniProtKB-EC"/>
</dbReference>
<dbReference type="GO" id="GO:0019877">
    <property type="term" value="P:diaminopimelate biosynthetic process"/>
    <property type="evidence" value="ECO:0007669"/>
    <property type="project" value="UniProtKB-KW"/>
</dbReference>
<dbReference type="GO" id="GO:0006526">
    <property type="term" value="P:L-arginine biosynthetic process"/>
    <property type="evidence" value="ECO:0007669"/>
    <property type="project" value="TreeGrafter"/>
</dbReference>
<dbReference type="GO" id="GO:0009089">
    <property type="term" value="P:lysine biosynthetic process via diaminopimelate"/>
    <property type="evidence" value="ECO:0007669"/>
    <property type="project" value="UniProtKB-UniPathway"/>
</dbReference>
<dbReference type="CDD" id="cd03891">
    <property type="entry name" value="M20_DapE_proteobac"/>
    <property type="match status" value="1"/>
</dbReference>
<dbReference type="Gene3D" id="1.10.150.900">
    <property type="match status" value="1"/>
</dbReference>
<dbReference type="Gene3D" id="3.30.70.360">
    <property type="match status" value="1"/>
</dbReference>
<dbReference type="Gene3D" id="3.40.630.10">
    <property type="entry name" value="Zn peptidases"/>
    <property type="match status" value="1"/>
</dbReference>
<dbReference type="HAMAP" id="MF_01690">
    <property type="entry name" value="DapE"/>
    <property type="match status" value="1"/>
</dbReference>
<dbReference type="InterPro" id="IPR001261">
    <property type="entry name" value="ArgE/DapE_CS"/>
</dbReference>
<dbReference type="InterPro" id="IPR036264">
    <property type="entry name" value="Bact_exopeptidase_dim_dom"/>
</dbReference>
<dbReference type="InterPro" id="IPR005941">
    <property type="entry name" value="DapE_proteobac"/>
</dbReference>
<dbReference type="InterPro" id="IPR002933">
    <property type="entry name" value="Peptidase_M20"/>
</dbReference>
<dbReference type="InterPro" id="IPR011650">
    <property type="entry name" value="Peptidase_M20_dimer"/>
</dbReference>
<dbReference type="InterPro" id="IPR050072">
    <property type="entry name" value="Peptidase_M20A"/>
</dbReference>
<dbReference type="NCBIfam" id="TIGR01246">
    <property type="entry name" value="dapE_proteo"/>
    <property type="match status" value="1"/>
</dbReference>
<dbReference type="NCBIfam" id="NF009557">
    <property type="entry name" value="PRK13009.1"/>
    <property type="match status" value="1"/>
</dbReference>
<dbReference type="PANTHER" id="PTHR43808">
    <property type="entry name" value="ACETYLORNITHINE DEACETYLASE"/>
    <property type="match status" value="1"/>
</dbReference>
<dbReference type="PANTHER" id="PTHR43808:SF31">
    <property type="entry name" value="N-ACETYL-L-CITRULLINE DEACETYLASE"/>
    <property type="match status" value="1"/>
</dbReference>
<dbReference type="Pfam" id="PF07687">
    <property type="entry name" value="M20_dimer"/>
    <property type="match status" value="1"/>
</dbReference>
<dbReference type="Pfam" id="PF01546">
    <property type="entry name" value="Peptidase_M20"/>
    <property type="match status" value="1"/>
</dbReference>
<dbReference type="SUPFAM" id="SSF55031">
    <property type="entry name" value="Bacterial exopeptidase dimerisation domain"/>
    <property type="match status" value="1"/>
</dbReference>
<dbReference type="SUPFAM" id="SSF53187">
    <property type="entry name" value="Zn-dependent exopeptidases"/>
    <property type="match status" value="1"/>
</dbReference>
<dbReference type="PROSITE" id="PS00758">
    <property type="entry name" value="ARGE_DAPE_CPG2_1"/>
    <property type="match status" value="1"/>
</dbReference>
<dbReference type="PROSITE" id="PS00759">
    <property type="entry name" value="ARGE_DAPE_CPG2_2"/>
    <property type="match status" value="1"/>
</dbReference>
<protein>
    <recommendedName>
        <fullName evidence="1">Succinyl-diaminopimelate desuccinylase</fullName>
        <shortName evidence="1">SDAP desuccinylase</shortName>
        <ecNumber evidence="1">3.5.1.18</ecNumber>
    </recommendedName>
    <alternativeName>
        <fullName evidence="1">N-succinyl-LL-2,6-diaminoheptanedioate amidohydrolase</fullName>
    </alternativeName>
</protein>
<proteinExistence type="inferred from homology"/>
<sequence>MNAKEFLIELLKFKSVTPNDDGALNFIAMELSDFEAFFIEKEGIKNLLLTKKFKDEGEHLAFGGHVDVVPAGEGWSNNAFAPVEKEGFIYARGAQDMKSGVAAFVDAAKNADFKGARLSLILTSDEEGEAIYGTKAVLEWMQERDMLPDYAVVAEPTCVKKIGDSIKIGRRGSINGKLLIRGKQGHVAYPEKCINPVHDFAPVLKLLAGFDLDPGSAEFSPSKIVITDIRGGMGVCNVTPNDLKLMFNVRNSPDTSLEDVKSYVEKICHGLNYELELKQSSEAFLTNIDNKIVQKMNESVQKITHEVPELNTKGGTSDARYFAKYGVKVVEFGVCNDRIHAIDERVSIEEFEKLCLVFKDLIENF</sequence>
<reference key="1">
    <citation type="journal article" date="2000" name="Nature">
        <title>The genome sequence of the food-borne pathogen Campylobacter jejuni reveals hypervariable sequences.</title>
        <authorList>
            <person name="Parkhill J."/>
            <person name="Wren B.W."/>
            <person name="Mungall K.L."/>
            <person name="Ketley J.M."/>
            <person name="Churcher C.M."/>
            <person name="Basham D."/>
            <person name="Chillingworth T."/>
            <person name="Davies R.M."/>
            <person name="Feltwell T."/>
            <person name="Holroyd S."/>
            <person name="Jagels K."/>
            <person name="Karlyshev A.V."/>
            <person name="Moule S."/>
            <person name="Pallen M.J."/>
            <person name="Penn C.W."/>
            <person name="Quail M.A."/>
            <person name="Rajandream M.A."/>
            <person name="Rutherford K.M."/>
            <person name="van Vliet A.H.M."/>
            <person name="Whitehead S."/>
            <person name="Barrell B.G."/>
        </authorList>
    </citation>
    <scope>NUCLEOTIDE SEQUENCE [LARGE SCALE GENOMIC DNA]</scope>
    <source>
        <strain>ATCC 700819 / NCTC 11168</strain>
    </source>
</reference>
<name>DAPE_CAMJE</name>